<feature type="chain" id="PRO_0000129577" description="Large ribosomal subunit protein uL2">
    <location>
        <begin position="1"/>
        <end position="277"/>
    </location>
</feature>
<feature type="region of interest" description="Disordered" evidence="2">
    <location>
        <begin position="24"/>
        <end position="55"/>
    </location>
</feature>
<feature type="region of interest" description="Disordered" evidence="2">
    <location>
        <begin position="221"/>
        <end position="277"/>
    </location>
</feature>
<feature type="strand" evidence="4">
    <location>
        <begin position="3"/>
        <end position="5"/>
    </location>
</feature>
<feature type="strand" evidence="4">
    <location>
        <begin position="9"/>
        <end position="13"/>
    </location>
</feature>
<feature type="strand" evidence="4">
    <location>
        <begin position="17"/>
        <end position="19"/>
    </location>
</feature>
<feature type="helix" evidence="4">
    <location>
        <begin position="31"/>
        <end position="33"/>
    </location>
</feature>
<feature type="strand" evidence="4">
    <location>
        <begin position="34"/>
        <end position="37"/>
    </location>
</feature>
<feature type="strand" evidence="5">
    <location>
        <begin position="51"/>
        <end position="54"/>
    </location>
</feature>
<feature type="strand" evidence="4">
    <location>
        <begin position="60"/>
        <end position="63"/>
    </location>
</feature>
<feature type="strand" evidence="4">
    <location>
        <begin position="76"/>
        <end position="82"/>
    </location>
</feature>
<feature type="strand" evidence="4">
    <location>
        <begin position="87"/>
        <end position="89"/>
    </location>
</feature>
<feature type="strand" evidence="4">
    <location>
        <begin position="91"/>
        <end position="96"/>
    </location>
</feature>
<feature type="strand" evidence="4">
    <location>
        <begin position="101"/>
        <end position="105"/>
    </location>
</feature>
<feature type="strand" evidence="4">
    <location>
        <begin position="118"/>
        <end position="121"/>
    </location>
</feature>
<feature type="strand" evidence="4">
    <location>
        <begin position="129"/>
        <end position="131"/>
    </location>
</feature>
<feature type="helix" evidence="4">
    <location>
        <begin position="132"/>
        <end position="134"/>
    </location>
</feature>
<feature type="strand" evidence="4">
    <location>
        <begin position="140"/>
        <end position="143"/>
    </location>
</feature>
<feature type="strand" evidence="4">
    <location>
        <begin position="162"/>
        <end position="168"/>
    </location>
</feature>
<feature type="strand" evidence="4">
    <location>
        <begin position="171"/>
        <end position="175"/>
    </location>
</feature>
<feature type="strand" evidence="4">
    <location>
        <begin position="181"/>
        <end position="185"/>
    </location>
</feature>
<feature type="strand" evidence="4">
    <location>
        <begin position="189"/>
        <end position="193"/>
    </location>
</feature>
<feature type="helix" evidence="4">
    <location>
        <begin position="198"/>
        <end position="202"/>
    </location>
</feature>
<feature type="helix" evidence="4">
    <location>
        <begin position="208"/>
        <end position="213"/>
    </location>
</feature>
<feature type="helix" evidence="4">
    <location>
        <begin position="222"/>
        <end position="224"/>
    </location>
</feature>
<feature type="turn" evidence="4">
    <location>
        <begin position="227"/>
        <end position="229"/>
    </location>
</feature>
<feature type="strand" evidence="4">
    <location>
        <begin position="236"/>
        <end position="238"/>
    </location>
</feature>
<feature type="strand" evidence="4">
    <location>
        <begin position="243"/>
        <end position="245"/>
    </location>
</feature>
<feature type="strand" evidence="4">
    <location>
        <begin position="251"/>
        <end position="253"/>
    </location>
</feature>
<feature type="helix" evidence="4">
    <location>
        <begin position="265"/>
        <end position="269"/>
    </location>
</feature>
<feature type="strand" evidence="4">
    <location>
        <begin position="270"/>
        <end position="272"/>
    </location>
</feature>
<accession>P60426</accession>
<accession>Q927L0</accession>
<name>RL2_LISMO</name>
<gene>
    <name evidence="1" type="primary">rplB</name>
    <name type="ordered locus">lmo2629</name>
</gene>
<protein>
    <recommendedName>
        <fullName evidence="1">Large ribosomal subunit protein uL2</fullName>
    </recommendedName>
    <alternativeName>
        <fullName evidence="3">50S ribosomal protein L2</fullName>
    </alternativeName>
</protein>
<keyword id="KW-0002">3D-structure</keyword>
<keyword id="KW-1185">Reference proteome</keyword>
<keyword id="KW-0687">Ribonucleoprotein</keyword>
<keyword id="KW-0689">Ribosomal protein</keyword>
<keyword id="KW-0694">RNA-binding</keyword>
<keyword id="KW-0699">rRNA-binding</keyword>
<sequence length="277" mass="30505">MAIKKYKPTTNGRRHMTSSDFAEITTSTPEKSLLRPLKKKAGRNNQGKLTVRHHGGGHKRQYRVIDFKRNKDGIPGRVATIEYDPNRSANIALINYADGEKRYIIAAKGLEVGQTIYSGAEADIKVGNALELKDIPVGTVIHNIEMKPGKGGQLVRSAGTSAQVLGKEGKYVLIRLNSGEVRMILATCRATIGQVGNEQHELINIGKAGRSRWMGKRPTVRGSVMNPNDHPHGGGEGKAPIGRKSPMSPWGKPTLGYKTRKKNNNSDKFIVRRRKKK</sequence>
<proteinExistence type="evidence at protein level"/>
<comment type="function">
    <text evidence="1">One of the primary rRNA binding proteins. Required for association of the 30S and 50S subunits to form the 70S ribosome, for tRNA binding and peptide bond formation. It has been suggested to have peptidyltransferase activity; this is somewhat controversial. Makes several contacts with the 16S rRNA in the 70S ribosome.</text>
</comment>
<comment type="subunit">
    <text evidence="1">Part of the 50S ribosomal subunit. Forms a bridge to the 30S subunit in the 70S ribosome.</text>
</comment>
<comment type="similarity">
    <text evidence="1">Belongs to the universal ribosomal protein uL2 family.</text>
</comment>
<organism>
    <name type="scientific">Listeria monocytogenes serovar 1/2a (strain ATCC BAA-679 / EGD-e)</name>
    <dbReference type="NCBI Taxonomy" id="169963"/>
    <lineage>
        <taxon>Bacteria</taxon>
        <taxon>Bacillati</taxon>
        <taxon>Bacillota</taxon>
        <taxon>Bacilli</taxon>
        <taxon>Bacillales</taxon>
        <taxon>Listeriaceae</taxon>
        <taxon>Listeria</taxon>
    </lineage>
</organism>
<dbReference type="EMBL" id="AL591983">
    <property type="protein sequence ID" value="CAD00707.1"/>
    <property type="molecule type" value="Genomic_DNA"/>
</dbReference>
<dbReference type="PIR" id="AE1403">
    <property type="entry name" value="AE1403"/>
</dbReference>
<dbReference type="RefSeq" id="NP_466152.1">
    <property type="nucleotide sequence ID" value="NC_003210.1"/>
</dbReference>
<dbReference type="RefSeq" id="WP_003727696.1">
    <property type="nucleotide sequence ID" value="NZ_CP149495.1"/>
</dbReference>
<dbReference type="PDB" id="7NHN">
    <property type="method" value="EM"/>
    <property type="resolution" value="2.90 A"/>
    <property type="chains" value="G=1-277"/>
</dbReference>
<dbReference type="PDB" id="8A57">
    <property type="method" value="EM"/>
    <property type="resolution" value="2.30 A"/>
    <property type="chains" value="G=1-277"/>
</dbReference>
<dbReference type="PDB" id="8A5I">
    <property type="method" value="EM"/>
    <property type="resolution" value="2.30 A"/>
    <property type="chains" value="G=1-277"/>
</dbReference>
<dbReference type="PDB" id="8A63">
    <property type="method" value="EM"/>
    <property type="resolution" value="3.10 A"/>
    <property type="chains" value="G=1-277"/>
</dbReference>
<dbReference type="PDBsum" id="7NHN"/>
<dbReference type="PDBsum" id="8A57"/>
<dbReference type="PDBsum" id="8A5I"/>
<dbReference type="PDBsum" id="8A63"/>
<dbReference type="EMDB" id="EMD-12334"/>
<dbReference type="EMDB" id="EMD-15161"/>
<dbReference type="EMDB" id="EMD-15175"/>
<dbReference type="EMDB" id="EMD-15204"/>
<dbReference type="SMR" id="P60426"/>
<dbReference type="STRING" id="169963.gene:17595347"/>
<dbReference type="PaxDb" id="169963-lmo2629"/>
<dbReference type="EnsemblBacteria" id="CAD00707">
    <property type="protein sequence ID" value="CAD00707"/>
    <property type="gene ID" value="CAD00707"/>
</dbReference>
<dbReference type="GeneID" id="93236051"/>
<dbReference type="GeneID" id="985132"/>
<dbReference type="KEGG" id="lmo:lmo2629"/>
<dbReference type="PATRIC" id="fig|169963.11.peg.2693"/>
<dbReference type="eggNOG" id="COG0090">
    <property type="taxonomic scope" value="Bacteria"/>
</dbReference>
<dbReference type="HOGENOM" id="CLU_036235_2_1_9"/>
<dbReference type="OrthoDB" id="9778722at2"/>
<dbReference type="PhylomeDB" id="P60426"/>
<dbReference type="BioCyc" id="LMON169963:LMO2629-MONOMER"/>
<dbReference type="Proteomes" id="UP000000817">
    <property type="component" value="Chromosome"/>
</dbReference>
<dbReference type="GO" id="GO:0015934">
    <property type="term" value="C:large ribosomal subunit"/>
    <property type="evidence" value="ECO:0007669"/>
    <property type="project" value="InterPro"/>
</dbReference>
<dbReference type="GO" id="GO:0003723">
    <property type="term" value="F:RNA binding"/>
    <property type="evidence" value="ECO:0000318"/>
    <property type="project" value="GO_Central"/>
</dbReference>
<dbReference type="GO" id="GO:0019843">
    <property type="term" value="F:rRNA binding"/>
    <property type="evidence" value="ECO:0007669"/>
    <property type="project" value="UniProtKB-UniRule"/>
</dbReference>
<dbReference type="GO" id="GO:0003735">
    <property type="term" value="F:structural constituent of ribosome"/>
    <property type="evidence" value="ECO:0000318"/>
    <property type="project" value="GO_Central"/>
</dbReference>
<dbReference type="GO" id="GO:0016740">
    <property type="term" value="F:transferase activity"/>
    <property type="evidence" value="ECO:0007669"/>
    <property type="project" value="InterPro"/>
</dbReference>
<dbReference type="GO" id="GO:0002181">
    <property type="term" value="P:cytoplasmic translation"/>
    <property type="evidence" value="ECO:0000318"/>
    <property type="project" value="GO_Central"/>
</dbReference>
<dbReference type="FunFam" id="2.30.30.30:FF:000001">
    <property type="entry name" value="50S ribosomal protein L2"/>
    <property type="match status" value="1"/>
</dbReference>
<dbReference type="FunFam" id="2.40.50.140:FF:000003">
    <property type="entry name" value="50S ribosomal protein L2"/>
    <property type="match status" value="1"/>
</dbReference>
<dbReference type="FunFam" id="4.10.950.10:FF:000001">
    <property type="entry name" value="50S ribosomal protein L2"/>
    <property type="match status" value="1"/>
</dbReference>
<dbReference type="Gene3D" id="2.30.30.30">
    <property type="match status" value="1"/>
</dbReference>
<dbReference type="Gene3D" id="2.40.50.140">
    <property type="entry name" value="Nucleic acid-binding proteins"/>
    <property type="match status" value="1"/>
</dbReference>
<dbReference type="Gene3D" id="4.10.950.10">
    <property type="entry name" value="Ribosomal protein L2, domain 3"/>
    <property type="match status" value="1"/>
</dbReference>
<dbReference type="HAMAP" id="MF_01320_B">
    <property type="entry name" value="Ribosomal_uL2_B"/>
    <property type="match status" value="1"/>
</dbReference>
<dbReference type="InterPro" id="IPR012340">
    <property type="entry name" value="NA-bd_OB-fold"/>
</dbReference>
<dbReference type="InterPro" id="IPR014722">
    <property type="entry name" value="Rib_uL2_dom2"/>
</dbReference>
<dbReference type="InterPro" id="IPR002171">
    <property type="entry name" value="Ribosomal_uL2"/>
</dbReference>
<dbReference type="InterPro" id="IPR005880">
    <property type="entry name" value="Ribosomal_uL2_bac/org-type"/>
</dbReference>
<dbReference type="InterPro" id="IPR022669">
    <property type="entry name" value="Ribosomal_uL2_C"/>
</dbReference>
<dbReference type="InterPro" id="IPR022671">
    <property type="entry name" value="Ribosomal_uL2_CS"/>
</dbReference>
<dbReference type="InterPro" id="IPR014726">
    <property type="entry name" value="Ribosomal_uL2_dom3"/>
</dbReference>
<dbReference type="InterPro" id="IPR022666">
    <property type="entry name" value="Ribosomal_uL2_RNA-bd_dom"/>
</dbReference>
<dbReference type="InterPro" id="IPR008991">
    <property type="entry name" value="Translation_prot_SH3-like_sf"/>
</dbReference>
<dbReference type="NCBIfam" id="TIGR01171">
    <property type="entry name" value="rplB_bact"/>
    <property type="match status" value="1"/>
</dbReference>
<dbReference type="PANTHER" id="PTHR13691:SF5">
    <property type="entry name" value="LARGE RIBOSOMAL SUBUNIT PROTEIN UL2M"/>
    <property type="match status" value="1"/>
</dbReference>
<dbReference type="PANTHER" id="PTHR13691">
    <property type="entry name" value="RIBOSOMAL PROTEIN L2"/>
    <property type="match status" value="1"/>
</dbReference>
<dbReference type="Pfam" id="PF00181">
    <property type="entry name" value="Ribosomal_L2"/>
    <property type="match status" value="1"/>
</dbReference>
<dbReference type="Pfam" id="PF03947">
    <property type="entry name" value="Ribosomal_L2_C"/>
    <property type="match status" value="1"/>
</dbReference>
<dbReference type="PIRSF" id="PIRSF002158">
    <property type="entry name" value="Ribosomal_L2"/>
    <property type="match status" value="1"/>
</dbReference>
<dbReference type="SMART" id="SM01383">
    <property type="entry name" value="Ribosomal_L2"/>
    <property type="match status" value="1"/>
</dbReference>
<dbReference type="SMART" id="SM01382">
    <property type="entry name" value="Ribosomal_L2_C"/>
    <property type="match status" value="1"/>
</dbReference>
<dbReference type="SUPFAM" id="SSF50249">
    <property type="entry name" value="Nucleic acid-binding proteins"/>
    <property type="match status" value="1"/>
</dbReference>
<dbReference type="SUPFAM" id="SSF50104">
    <property type="entry name" value="Translation proteins SH3-like domain"/>
    <property type="match status" value="1"/>
</dbReference>
<dbReference type="PROSITE" id="PS00467">
    <property type="entry name" value="RIBOSOMAL_L2"/>
    <property type="match status" value="1"/>
</dbReference>
<evidence type="ECO:0000255" key="1">
    <source>
        <dbReference type="HAMAP-Rule" id="MF_01320"/>
    </source>
</evidence>
<evidence type="ECO:0000256" key="2">
    <source>
        <dbReference type="SAM" id="MobiDB-lite"/>
    </source>
</evidence>
<evidence type="ECO:0000305" key="3"/>
<evidence type="ECO:0007829" key="4">
    <source>
        <dbReference type="PDB" id="8A57"/>
    </source>
</evidence>
<evidence type="ECO:0007829" key="5">
    <source>
        <dbReference type="PDB" id="8A5I"/>
    </source>
</evidence>
<reference key="1">
    <citation type="journal article" date="2001" name="Science">
        <title>Comparative genomics of Listeria species.</title>
        <authorList>
            <person name="Glaser P."/>
            <person name="Frangeul L."/>
            <person name="Buchrieser C."/>
            <person name="Rusniok C."/>
            <person name="Amend A."/>
            <person name="Baquero F."/>
            <person name="Berche P."/>
            <person name="Bloecker H."/>
            <person name="Brandt P."/>
            <person name="Chakraborty T."/>
            <person name="Charbit A."/>
            <person name="Chetouani F."/>
            <person name="Couve E."/>
            <person name="de Daruvar A."/>
            <person name="Dehoux P."/>
            <person name="Domann E."/>
            <person name="Dominguez-Bernal G."/>
            <person name="Duchaud E."/>
            <person name="Durant L."/>
            <person name="Dussurget O."/>
            <person name="Entian K.-D."/>
            <person name="Fsihi H."/>
            <person name="Garcia-del Portillo F."/>
            <person name="Garrido P."/>
            <person name="Gautier L."/>
            <person name="Goebel W."/>
            <person name="Gomez-Lopez N."/>
            <person name="Hain T."/>
            <person name="Hauf J."/>
            <person name="Jackson D."/>
            <person name="Jones L.-M."/>
            <person name="Kaerst U."/>
            <person name="Kreft J."/>
            <person name="Kuhn M."/>
            <person name="Kunst F."/>
            <person name="Kurapkat G."/>
            <person name="Madueno E."/>
            <person name="Maitournam A."/>
            <person name="Mata Vicente J."/>
            <person name="Ng E."/>
            <person name="Nedjari H."/>
            <person name="Nordsiek G."/>
            <person name="Novella S."/>
            <person name="de Pablos B."/>
            <person name="Perez-Diaz J.-C."/>
            <person name="Purcell R."/>
            <person name="Remmel B."/>
            <person name="Rose M."/>
            <person name="Schlueter T."/>
            <person name="Simoes N."/>
            <person name="Tierrez A."/>
            <person name="Vazquez-Boland J.-A."/>
            <person name="Voss H."/>
            <person name="Wehland J."/>
            <person name="Cossart P."/>
        </authorList>
    </citation>
    <scope>NUCLEOTIDE SEQUENCE [LARGE SCALE GENOMIC DNA]</scope>
    <source>
        <strain>ATCC BAA-679 / EGD-e</strain>
    </source>
</reference>